<gene>
    <name type="primary">nrdA</name>
    <name type="ordered locus">CT_827</name>
</gene>
<reference key="1">
    <citation type="journal article" date="1998" name="Science">
        <title>Genome sequence of an obligate intracellular pathogen of humans: Chlamydia trachomatis.</title>
        <authorList>
            <person name="Stephens R.S."/>
            <person name="Kalman S."/>
            <person name="Lammel C.J."/>
            <person name="Fan J."/>
            <person name="Marathe R."/>
            <person name="Aravind L."/>
            <person name="Mitchell W.P."/>
            <person name="Olinger L."/>
            <person name="Tatusov R.L."/>
            <person name="Zhao Q."/>
            <person name="Koonin E.V."/>
            <person name="Davis R.W."/>
        </authorList>
    </citation>
    <scope>NUCLEOTIDE SEQUENCE [LARGE SCALE GENOMIC DNA]</scope>
    <source>
        <strain>ATCC VR-885 / DSM 19411 / UW-3/Cx</strain>
    </source>
</reference>
<sequence>MVDLQEKQCTIVKRNGMFVPFDRNRIFQALEAAFRDTRRIDDHMPLPEDLESSIRSITHQVVKEVVQKITDGQVVTVERIQDMVESQLYVNGLQDVARDYIVYRDDRKAHRKKSWQSLSVVRRCGTVVHFNPMKISAALEKAFRATDKTEGMTPSSVREEINALTQNIVAEIEECCPQQDRRIDIEKIQDIVEQQLMVVGHYAVAKNYILYREARARVRDNREEDGSTEKTIAEEAVEVLSKDGSTYTMTHSQLLAHLARACSRFPETTDAALLTDMAFANFYSGIKESEVVLACIMAARANIEKEPDYAFVAAELLLDVVYKEALGKSKYAEDLEQAHRDHFKRYIAEGDTYRLNAELKHLFDLDALADAMDLSRDLQFSYMGIQNLYDRYFNHHEGCRLETPQIFWMRVAMGLALNEQDKTSWAITFYNLLSTFRYTPATPTLFNSGMRHSQLSSCYLSTVQDNLVNIYKVIADNAMLSKWAGGIGNDWTAIRATGALIKGTNGRSQGVIPFIKVTNDTAVAVNQGGKRKGAVCVYLEVWHLDYEDFLELRKNTGDERRRAHDVNIASWIPDLFFKRLQQKGTWTLFSPDDVPGLHDAYGEEFERLYEEYERKVDTGEIRLFKKVEAEDLWRKMLSMLFETGHPWMTFKDPSNIRSAQDHKGVVRCSNLCTEILLNCSETETAVCNLGSINLVQHIVGDGLDEEKLSETISIAVRMLDNVIDINFYPTKEAKEANFAHRAIGLGVMGFQDALYKLDISYASQEAVEFADYSSELISYYAIQASCLLAKERGTYSSYKGSKWDRGLLPIDTIQLLANYRGEANLQMDTSSRKDWEPIRSLVKEHGMRHCQLMAIAPTATISNIIGVTQSIEPTYKHLFVKSNLSGEFTIPNVYLIEKLKKLGIWDADMLDDLKYFDGSLLEIERIPDHLKHIFLTAFEIEPEWIIECASRRQKWIDMGQSLNLYLAQPDGKKLSNMYLTAWKKGLKTTYYLRSSSATTVEKSFVDINKRGIQPRWMKNKSASAGIIVERAKKAPVCSLEEGCEACQ</sequence>
<dbReference type="EC" id="1.17.4.1"/>
<dbReference type="EMBL" id="AE001273">
    <property type="protein sequence ID" value="AAC68424.2"/>
    <property type="molecule type" value="Genomic_DNA"/>
</dbReference>
<dbReference type="PIR" id="D71466">
    <property type="entry name" value="D71466"/>
</dbReference>
<dbReference type="RefSeq" id="NP_220348.1">
    <property type="nucleotide sequence ID" value="NC_000117.1"/>
</dbReference>
<dbReference type="RefSeq" id="WP_009872213.1">
    <property type="nucleotide sequence ID" value="NC_000117.1"/>
</dbReference>
<dbReference type="SMR" id="O84834"/>
<dbReference type="FunCoup" id="O84834">
    <property type="interactions" value="206"/>
</dbReference>
<dbReference type="STRING" id="272561.CT_827"/>
<dbReference type="EnsemblBacteria" id="AAC68424">
    <property type="protein sequence ID" value="AAC68424"/>
    <property type="gene ID" value="CT_827"/>
</dbReference>
<dbReference type="GeneID" id="884629"/>
<dbReference type="KEGG" id="ctr:CT_827"/>
<dbReference type="PATRIC" id="fig|272561.5.peg.913"/>
<dbReference type="HOGENOM" id="CLU_000404_3_0_0"/>
<dbReference type="InParanoid" id="O84834"/>
<dbReference type="OrthoDB" id="9762933at2"/>
<dbReference type="BioCyc" id="MetaCyc:MONOMER-15783"/>
<dbReference type="Proteomes" id="UP000000431">
    <property type="component" value="Chromosome"/>
</dbReference>
<dbReference type="GO" id="GO:0005971">
    <property type="term" value="C:ribonucleoside-diphosphate reductase complex"/>
    <property type="evidence" value="ECO:0000318"/>
    <property type="project" value="GO_Central"/>
</dbReference>
<dbReference type="GO" id="GO:0005524">
    <property type="term" value="F:ATP binding"/>
    <property type="evidence" value="ECO:0000318"/>
    <property type="project" value="GO_Central"/>
</dbReference>
<dbReference type="GO" id="GO:0004748">
    <property type="term" value="F:ribonucleoside-diphosphate reductase activity, thioredoxin disulfide as acceptor"/>
    <property type="evidence" value="ECO:0000318"/>
    <property type="project" value="GO_Central"/>
</dbReference>
<dbReference type="GO" id="GO:0009263">
    <property type="term" value="P:deoxyribonucleotide biosynthetic process"/>
    <property type="evidence" value="ECO:0000318"/>
    <property type="project" value="GO_Central"/>
</dbReference>
<dbReference type="CDD" id="cd01679">
    <property type="entry name" value="RNR_I"/>
    <property type="match status" value="1"/>
</dbReference>
<dbReference type="FunFam" id="3.20.70.20:FF:000009">
    <property type="entry name" value="Ribonucleoside-diphosphate reductase"/>
    <property type="match status" value="1"/>
</dbReference>
<dbReference type="Gene3D" id="3.20.70.20">
    <property type="match status" value="1"/>
</dbReference>
<dbReference type="InterPro" id="IPR005144">
    <property type="entry name" value="ATP-cone_dom"/>
</dbReference>
<dbReference type="InterPro" id="IPR013346">
    <property type="entry name" value="NrdE_NrdA_C"/>
</dbReference>
<dbReference type="InterPro" id="IPR000788">
    <property type="entry name" value="RNR_lg_C"/>
</dbReference>
<dbReference type="InterPro" id="IPR013509">
    <property type="entry name" value="RNR_lsu_N"/>
</dbReference>
<dbReference type="InterPro" id="IPR008926">
    <property type="entry name" value="RNR_R1-su_N"/>
</dbReference>
<dbReference type="InterPro" id="IPR039718">
    <property type="entry name" value="Rrm1"/>
</dbReference>
<dbReference type="NCBIfam" id="TIGR02506">
    <property type="entry name" value="NrdE_NrdA"/>
    <property type="match status" value="1"/>
</dbReference>
<dbReference type="NCBIfam" id="NF005544">
    <property type="entry name" value="PRK07207.1"/>
    <property type="match status" value="1"/>
</dbReference>
<dbReference type="NCBIfam" id="NF009029">
    <property type="entry name" value="PRK12365.1"/>
    <property type="match status" value="1"/>
</dbReference>
<dbReference type="PANTHER" id="PTHR11573">
    <property type="entry name" value="RIBONUCLEOSIDE-DIPHOSPHATE REDUCTASE LARGE CHAIN"/>
    <property type="match status" value="1"/>
</dbReference>
<dbReference type="PANTHER" id="PTHR11573:SF6">
    <property type="entry name" value="RIBONUCLEOSIDE-DIPHOSPHATE REDUCTASE LARGE SUBUNIT"/>
    <property type="match status" value="1"/>
</dbReference>
<dbReference type="Pfam" id="PF03477">
    <property type="entry name" value="ATP-cone"/>
    <property type="match status" value="2"/>
</dbReference>
<dbReference type="Pfam" id="PF02867">
    <property type="entry name" value="Ribonuc_red_lgC"/>
    <property type="match status" value="1"/>
</dbReference>
<dbReference type="Pfam" id="PF00317">
    <property type="entry name" value="Ribonuc_red_lgN"/>
    <property type="match status" value="1"/>
</dbReference>
<dbReference type="PRINTS" id="PR01183">
    <property type="entry name" value="RIBORDTASEM1"/>
</dbReference>
<dbReference type="SUPFAM" id="SSF51998">
    <property type="entry name" value="PFL-like glycyl radical enzymes"/>
    <property type="match status" value="1"/>
</dbReference>
<dbReference type="SUPFAM" id="SSF48168">
    <property type="entry name" value="R1 subunit of ribonucleotide reductase, N-terminal domain"/>
    <property type="match status" value="1"/>
</dbReference>
<dbReference type="PROSITE" id="PS51161">
    <property type="entry name" value="ATP_CONE"/>
    <property type="match status" value="3"/>
</dbReference>
<dbReference type="PROSITE" id="PS00089">
    <property type="entry name" value="RIBORED_LARGE"/>
    <property type="match status" value="1"/>
</dbReference>
<feature type="chain" id="PRO_0000187212" description="Ribonucleoside-diphosphate reductase subunit alpha">
    <location>
        <begin position="1"/>
        <end position="1047"/>
    </location>
</feature>
<feature type="domain" description="ATP-cone 1" evidence="2">
    <location>
        <begin position="9"/>
        <end position="111"/>
    </location>
</feature>
<feature type="domain" description="ATP-cone 2" evidence="2">
    <location>
        <begin position="118"/>
        <end position="219"/>
    </location>
</feature>
<feature type="domain" description="ATP-cone 3" evidence="2">
    <location>
        <begin position="237"/>
        <end position="327"/>
    </location>
</feature>
<feature type="active site" description="Proton acceptor" evidence="1">
    <location>
        <position position="670"/>
    </location>
</feature>
<feature type="active site" description="Cysteine radical intermediate" evidence="1">
    <location>
        <position position="672"/>
    </location>
</feature>
<feature type="active site" description="Proton acceptor" evidence="1">
    <location>
        <position position="674"/>
    </location>
</feature>
<feature type="binding site" evidence="1">
    <location>
        <position position="442"/>
    </location>
    <ligand>
        <name>substrate</name>
    </ligand>
</feature>
<feature type="binding site" evidence="1">
    <location>
        <begin position="457"/>
        <end position="458"/>
    </location>
    <ligand>
        <name>substrate</name>
    </ligand>
</feature>
<feature type="binding site" evidence="1">
    <location>
        <position position="486"/>
    </location>
    <ligand>
        <name>substrate</name>
    </ligand>
</feature>
<feature type="binding site" evidence="1">
    <location>
        <begin position="670"/>
        <end position="674"/>
    </location>
    <ligand>
        <name>substrate</name>
    </ligand>
</feature>
<feature type="binding site" evidence="1">
    <location>
        <begin position="857"/>
        <end position="861"/>
    </location>
    <ligand>
        <name>substrate</name>
    </ligand>
</feature>
<feature type="site" description="Important for hydrogen atom transfer" evidence="1">
    <location>
        <position position="458"/>
    </location>
</feature>
<feature type="site" description="Allosteric effector binding" evidence="1">
    <location>
        <position position="465"/>
    </location>
</feature>
<feature type="site" description="Allosteric effector binding" evidence="1">
    <location>
        <position position="495"/>
    </location>
</feature>
<feature type="site" description="Important for hydrogen atom transfer" evidence="1">
    <location>
        <position position="687"/>
    </location>
</feature>
<feature type="site" description="Important for electron transfer" evidence="1">
    <location>
        <position position="990"/>
    </location>
</feature>
<feature type="site" description="Important for electron transfer" evidence="1">
    <location>
        <position position="991"/>
    </location>
</feature>
<feature type="site" description="Interacts with thioredoxin/glutaredoxin" evidence="1">
    <location>
        <position position="1043"/>
    </location>
</feature>
<feature type="site" description="Interacts with thioredoxin/glutaredoxin" evidence="1">
    <location>
        <position position="1046"/>
    </location>
</feature>
<feature type="disulfide bond" description="Redox-active" evidence="1">
    <location>
        <begin position="458"/>
        <end position="687"/>
    </location>
</feature>
<proteinExistence type="inferred from homology"/>
<name>RIR1_CHLTR</name>
<evidence type="ECO:0000250" key="1"/>
<evidence type="ECO:0000255" key="2">
    <source>
        <dbReference type="PROSITE-ProRule" id="PRU00492"/>
    </source>
</evidence>
<evidence type="ECO:0000305" key="3"/>
<organism>
    <name type="scientific">Chlamydia trachomatis serovar D (strain ATCC VR-885 / DSM 19411 / UW-3/Cx)</name>
    <dbReference type="NCBI Taxonomy" id="272561"/>
    <lineage>
        <taxon>Bacteria</taxon>
        <taxon>Pseudomonadati</taxon>
        <taxon>Chlamydiota</taxon>
        <taxon>Chlamydiia</taxon>
        <taxon>Chlamydiales</taxon>
        <taxon>Chlamydiaceae</taxon>
        <taxon>Chlamydia/Chlamydophila group</taxon>
        <taxon>Chlamydia</taxon>
    </lineage>
</organism>
<comment type="function">
    <text evidence="1">Provides the precursors necessary for DNA synthesis. Catalyzes the biosynthesis of deoxyribonucleotides from the corresponding ribonucleotides (By similarity).</text>
</comment>
<comment type="catalytic activity">
    <reaction>
        <text>a 2'-deoxyribonucleoside 5'-diphosphate + [thioredoxin]-disulfide + H2O = a ribonucleoside 5'-diphosphate + [thioredoxin]-dithiol</text>
        <dbReference type="Rhea" id="RHEA:23252"/>
        <dbReference type="Rhea" id="RHEA-COMP:10698"/>
        <dbReference type="Rhea" id="RHEA-COMP:10700"/>
        <dbReference type="ChEBI" id="CHEBI:15377"/>
        <dbReference type="ChEBI" id="CHEBI:29950"/>
        <dbReference type="ChEBI" id="CHEBI:50058"/>
        <dbReference type="ChEBI" id="CHEBI:57930"/>
        <dbReference type="ChEBI" id="CHEBI:73316"/>
        <dbReference type="EC" id="1.17.4.1"/>
    </reaction>
</comment>
<comment type="activity regulation">
    <text evidence="1">Under complex allosteric control mediated by deoxynucleoside triphosphates and ATP binding. The type of nucleotide bound at the specificity site determines substrate preference. It seems probable that ATP makes the enzyme reduce CDP and UDP, dGTP favors ADP reduction and dTTP favors GDP reduction (By similarity).</text>
</comment>
<comment type="subunit">
    <text evidence="1">Tetramer of two alpha and two beta subunits.</text>
</comment>
<comment type="similarity">
    <text evidence="3">Belongs to the ribonucleoside diphosphate reductase large chain family.</text>
</comment>
<keyword id="KW-0021">Allosteric enzyme</keyword>
<keyword id="KW-0067">ATP-binding</keyword>
<keyword id="KW-0215">Deoxyribonucleotide synthesis</keyword>
<keyword id="KW-1015">Disulfide bond</keyword>
<keyword id="KW-0547">Nucleotide-binding</keyword>
<keyword id="KW-0560">Oxidoreductase</keyword>
<keyword id="KW-1185">Reference proteome</keyword>
<keyword id="KW-0677">Repeat</keyword>
<protein>
    <recommendedName>
        <fullName>Ribonucleoside-diphosphate reductase subunit alpha</fullName>
        <ecNumber>1.17.4.1</ecNumber>
    </recommendedName>
    <alternativeName>
        <fullName>Ribonucleotide reductase</fullName>
    </alternativeName>
</protein>
<accession>O84834</accession>